<comment type="function">
    <text evidence="1">Catalyzes the reduction of the glycolytic intermediate dihydroxyacetone phosphate (DHAP) to sn-glycerol 3-phosphate (G3P), the key precursor for phospholipid synthesis.</text>
</comment>
<comment type="catalytic activity">
    <reaction evidence="1">
        <text>sn-glycerol 3-phosphate + NAD(+) = dihydroxyacetone phosphate + NADH + H(+)</text>
        <dbReference type="Rhea" id="RHEA:11092"/>
        <dbReference type="ChEBI" id="CHEBI:15378"/>
        <dbReference type="ChEBI" id="CHEBI:57540"/>
        <dbReference type="ChEBI" id="CHEBI:57597"/>
        <dbReference type="ChEBI" id="CHEBI:57642"/>
        <dbReference type="ChEBI" id="CHEBI:57945"/>
        <dbReference type="EC" id="1.1.1.94"/>
    </reaction>
    <physiologicalReaction direction="right-to-left" evidence="1">
        <dbReference type="Rhea" id="RHEA:11094"/>
    </physiologicalReaction>
</comment>
<comment type="catalytic activity">
    <reaction evidence="1">
        <text>sn-glycerol 3-phosphate + NADP(+) = dihydroxyacetone phosphate + NADPH + H(+)</text>
        <dbReference type="Rhea" id="RHEA:11096"/>
        <dbReference type="ChEBI" id="CHEBI:15378"/>
        <dbReference type="ChEBI" id="CHEBI:57597"/>
        <dbReference type="ChEBI" id="CHEBI:57642"/>
        <dbReference type="ChEBI" id="CHEBI:57783"/>
        <dbReference type="ChEBI" id="CHEBI:58349"/>
        <dbReference type="EC" id="1.1.1.94"/>
    </reaction>
    <physiologicalReaction direction="right-to-left" evidence="1">
        <dbReference type="Rhea" id="RHEA:11098"/>
    </physiologicalReaction>
</comment>
<comment type="pathway">
    <text evidence="1">Membrane lipid metabolism; glycerophospholipid metabolism.</text>
</comment>
<comment type="subcellular location">
    <subcellularLocation>
        <location evidence="1">Cytoplasm</location>
    </subcellularLocation>
</comment>
<comment type="similarity">
    <text evidence="1">Belongs to the NAD-dependent glycerol-3-phosphate dehydrogenase family.</text>
</comment>
<organism>
    <name type="scientific">Bacillus cereus (strain B4264)</name>
    <dbReference type="NCBI Taxonomy" id="405532"/>
    <lineage>
        <taxon>Bacteria</taxon>
        <taxon>Bacillati</taxon>
        <taxon>Bacillota</taxon>
        <taxon>Bacilli</taxon>
        <taxon>Bacillales</taxon>
        <taxon>Bacillaceae</taxon>
        <taxon>Bacillus</taxon>
        <taxon>Bacillus cereus group</taxon>
    </lineage>
</organism>
<keyword id="KW-0963">Cytoplasm</keyword>
<keyword id="KW-0444">Lipid biosynthesis</keyword>
<keyword id="KW-0443">Lipid metabolism</keyword>
<keyword id="KW-0520">NAD</keyword>
<keyword id="KW-0521">NADP</keyword>
<keyword id="KW-0547">Nucleotide-binding</keyword>
<keyword id="KW-0560">Oxidoreductase</keyword>
<keyword id="KW-0594">Phospholipid biosynthesis</keyword>
<keyword id="KW-1208">Phospholipid metabolism</keyword>
<protein>
    <recommendedName>
        <fullName evidence="1">Glycerol-3-phosphate dehydrogenase [NAD(P)+]</fullName>
        <ecNumber evidence="1">1.1.1.94</ecNumber>
    </recommendedName>
    <alternativeName>
        <fullName evidence="1">NAD(P)(+)-dependent glycerol-3-phosphate dehydrogenase</fullName>
    </alternativeName>
    <alternativeName>
        <fullName evidence="1">NAD(P)H-dependent dihydroxyacetone-phosphate reductase</fullName>
    </alternativeName>
</protein>
<evidence type="ECO:0000255" key="1">
    <source>
        <dbReference type="HAMAP-Rule" id="MF_00394"/>
    </source>
</evidence>
<gene>
    <name evidence="1" type="primary">gpsA</name>
    <name type="ordered locus">BCB4264_A1560</name>
</gene>
<proteinExistence type="inferred from homology"/>
<accession>B7HHQ8</accession>
<sequence length="340" mass="36692">MTKITVVGAGSWGTALAMVLADNGHDVRIWGNRPELMDEINTKHENSRYLPGITLPSTIVAYSSLEEALVDVNTVLLVVPTKAYRDVLQEMKEIVTEPITWIHASKGIEPGTSKRISEVIEEEIPEHLIKDVVVLSGPSHAEEVGLRQATTVTSAAKRMEAAEEVQDLFMNSYFRVYTNPDIVGVELGGALKNIIALAAGITDGLGLGDNAKAALMTRGLTEIARLGRKMGGNPLTFAGLTGMGDLIVTCTSVHSRNWRAGNMLGKGHSLEEVLESMGMVVEGVRTTKAAHELAEKMEVEMPITAALYDVLFNGNNVKDAVGSLMGRVRKHEVEAIPDLL</sequence>
<reference key="1">
    <citation type="submission" date="2008-10" db="EMBL/GenBank/DDBJ databases">
        <title>Genome sequence of Bacillus cereus B4264.</title>
        <authorList>
            <person name="Dodson R.J."/>
            <person name="Durkin A.S."/>
            <person name="Rosovitz M.J."/>
            <person name="Rasko D.A."/>
            <person name="Hoffmaster A."/>
            <person name="Ravel J."/>
            <person name="Sutton G."/>
        </authorList>
    </citation>
    <scope>NUCLEOTIDE SEQUENCE [LARGE SCALE GENOMIC DNA]</scope>
    <source>
        <strain>B4264</strain>
    </source>
</reference>
<name>GPDA_BACC4</name>
<dbReference type="EC" id="1.1.1.94" evidence="1"/>
<dbReference type="EMBL" id="CP001176">
    <property type="protein sequence ID" value="ACK63323.1"/>
    <property type="molecule type" value="Genomic_DNA"/>
</dbReference>
<dbReference type="RefSeq" id="WP_000161763.1">
    <property type="nucleotide sequence ID" value="NZ_VEHB01000003.1"/>
</dbReference>
<dbReference type="SMR" id="B7HHQ8"/>
<dbReference type="KEGG" id="bcb:BCB4264_A1560"/>
<dbReference type="HOGENOM" id="CLU_033449_0_2_9"/>
<dbReference type="UniPathway" id="UPA00940"/>
<dbReference type="Proteomes" id="UP000007096">
    <property type="component" value="Chromosome"/>
</dbReference>
<dbReference type="GO" id="GO:0005829">
    <property type="term" value="C:cytosol"/>
    <property type="evidence" value="ECO:0007669"/>
    <property type="project" value="TreeGrafter"/>
</dbReference>
<dbReference type="GO" id="GO:0047952">
    <property type="term" value="F:glycerol-3-phosphate dehydrogenase [NAD(P)+] activity"/>
    <property type="evidence" value="ECO:0007669"/>
    <property type="project" value="UniProtKB-UniRule"/>
</dbReference>
<dbReference type="GO" id="GO:0051287">
    <property type="term" value="F:NAD binding"/>
    <property type="evidence" value="ECO:0007669"/>
    <property type="project" value="InterPro"/>
</dbReference>
<dbReference type="GO" id="GO:0005975">
    <property type="term" value="P:carbohydrate metabolic process"/>
    <property type="evidence" value="ECO:0007669"/>
    <property type="project" value="InterPro"/>
</dbReference>
<dbReference type="GO" id="GO:0046167">
    <property type="term" value="P:glycerol-3-phosphate biosynthetic process"/>
    <property type="evidence" value="ECO:0007669"/>
    <property type="project" value="UniProtKB-UniRule"/>
</dbReference>
<dbReference type="GO" id="GO:0046168">
    <property type="term" value="P:glycerol-3-phosphate catabolic process"/>
    <property type="evidence" value="ECO:0007669"/>
    <property type="project" value="InterPro"/>
</dbReference>
<dbReference type="GO" id="GO:0006650">
    <property type="term" value="P:glycerophospholipid metabolic process"/>
    <property type="evidence" value="ECO:0007669"/>
    <property type="project" value="UniProtKB-UniRule"/>
</dbReference>
<dbReference type="GO" id="GO:0008654">
    <property type="term" value="P:phospholipid biosynthetic process"/>
    <property type="evidence" value="ECO:0007669"/>
    <property type="project" value="UniProtKB-KW"/>
</dbReference>
<dbReference type="FunFam" id="1.10.1040.10:FF:000001">
    <property type="entry name" value="Glycerol-3-phosphate dehydrogenase [NAD(P)+]"/>
    <property type="match status" value="1"/>
</dbReference>
<dbReference type="FunFam" id="3.40.50.720:FF:000019">
    <property type="entry name" value="Glycerol-3-phosphate dehydrogenase [NAD(P)+]"/>
    <property type="match status" value="1"/>
</dbReference>
<dbReference type="Gene3D" id="1.10.1040.10">
    <property type="entry name" value="N-(1-d-carboxylethyl)-l-norvaline Dehydrogenase, domain 2"/>
    <property type="match status" value="1"/>
</dbReference>
<dbReference type="Gene3D" id="3.40.50.720">
    <property type="entry name" value="NAD(P)-binding Rossmann-like Domain"/>
    <property type="match status" value="1"/>
</dbReference>
<dbReference type="HAMAP" id="MF_00394">
    <property type="entry name" value="NAD_Glyc3P_dehydrog"/>
    <property type="match status" value="1"/>
</dbReference>
<dbReference type="InterPro" id="IPR008927">
    <property type="entry name" value="6-PGluconate_DH-like_C_sf"/>
</dbReference>
<dbReference type="InterPro" id="IPR013328">
    <property type="entry name" value="6PGD_dom2"/>
</dbReference>
<dbReference type="InterPro" id="IPR006168">
    <property type="entry name" value="G3P_DH_NAD-dep"/>
</dbReference>
<dbReference type="InterPro" id="IPR006109">
    <property type="entry name" value="G3P_DH_NAD-dep_C"/>
</dbReference>
<dbReference type="InterPro" id="IPR011128">
    <property type="entry name" value="G3P_DH_NAD-dep_N"/>
</dbReference>
<dbReference type="InterPro" id="IPR036291">
    <property type="entry name" value="NAD(P)-bd_dom_sf"/>
</dbReference>
<dbReference type="NCBIfam" id="NF000940">
    <property type="entry name" value="PRK00094.1-2"/>
    <property type="match status" value="1"/>
</dbReference>
<dbReference type="NCBIfam" id="NF000941">
    <property type="entry name" value="PRK00094.1-3"/>
    <property type="match status" value="1"/>
</dbReference>
<dbReference type="NCBIfam" id="NF000942">
    <property type="entry name" value="PRK00094.1-4"/>
    <property type="match status" value="1"/>
</dbReference>
<dbReference type="PANTHER" id="PTHR11728">
    <property type="entry name" value="GLYCEROL-3-PHOSPHATE DEHYDROGENASE"/>
    <property type="match status" value="1"/>
</dbReference>
<dbReference type="PANTHER" id="PTHR11728:SF1">
    <property type="entry name" value="GLYCEROL-3-PHOSPHATE DEHYDROGENASE [NAD(+)] 2, CHLOROPLASTIC"/>
    <property type="match status" value="1"/>
</dbReference>
<dbReference type="Pfam" id="PF07479">
    <property type="entry name" value="NAD_Gly3P_dh_C"/>
    <property type="match status" value="1"/>
</dbReference>
<dbReference type="Pfam" id="PF01210">
    <property type="entry name" value="NAD_Gly3P_dh_N"/>
    <property type="match status" value="1"/>
</dbReference>
<dbReference type="PIRSF" id="PIRSF000114">
    <property type="entry name" value="Glycerol-3-P_dh"/>
    <property type="match status" value="1"/>
</dbReference>
<dbReference type="PRINTS" id="PR00077">
    <property type="entry name" value="GPDHDRGNASE"/>
</dbReference>
<dbReference type="SUPFAM" id="SSF48179">
    <property type="entry name" value="6-phosphogluconate dehydrogenase C-terminal domain-like"/>
    <property type="match status" value="1"/>
</dbReference>
<dbReference type="SUPFAM" id="SSF51735">
    <property type="entry name" value="NAD(P)-binding Rossmann-fold domains"/>
    <property type="match status" value="1"/>
</dbReference>
<dbReference type="PROSITE" id="PS00957">
    <property type="entry name" value="NAD_G3PDH"/>
    <property type="match status" value="1"/>
</dbReference>
<feature type="chain" id="PRO_1000123118" description="Glycerol-3-phosphate dehydrogenase [NAD(P)+]">
    <location>
        <begin position="1"/>
        <end position="340"/>
    </location>
</feature>
<feature type="active site" description="Proton acceptor" evidence="1">
    <location>
        <position position="192"/>
    </location>
</feature>
<feature type="binding site" evidence="1">
    <location>
        <position position="11"/>
    </location>
    <ligand>
        <name>NADPH</name>
        <dbReference type="ChEBI" id="CHEBI:57783"/>
    </ligand>
</feature>
<feature type="binding site" evidence="1">
    <location>
        <position position="12"/>
    </location>
    <ligand>
        <name>NADPH</name>
        <dbReference type="ChEBI" id="CHEBI:57783"/>
    </ligand>
</feature>
<feature type="binding site" evidence="1">
    <location>
        <position position="33"/>
    </location>
    <ligand>
        <name>NADPH</name>
        <dbReference type="ChEBI" id="CHEBI:57783"/>
    </ligand>
</feature>
<feature type="binding site" evidence="1">
    <location>
        <position position="106"/>
    </location>
    <ligand>
        <name>NADPH</name>
        <dbReference type="ChEBI" id="CHEBI:57783"/>
    </ligand>
</feature>
<feature type="binding site" evidence="1">
    <location>
        <position position="106"/>
    </location>
    <ligand>
        <name>sn-glycerol 3-phosphate</name>
        <dbReference type="ChEBI" id="CHEBI:57597"/>
    </ligand>
</feature>
<feature type="binding site" evidence="1">
    <location>
        <position position="137"/>
    </location>
    <ligand>
        <name>sn-glycerol 3-phosphate</name>
        <dbReference type="ChEBI" id="CHEBI:57597"/>
    </ligand>
</feature>
<feature type="binding site" evidence="1">
    <location>
        <position position="139"/>
    </location>
    <ligand>
        <name>sn-glycerol 3-phosphate</name>
        <dbReference type="ChEBI" id="CHEBI:57597"/>
    </ligand>
</feature>
<feature type="binding site" evidence="1">
    <location>
        <position position="141"/>
    </location>
    <ligand>
        <name>NADPH</name>
        <dbReference type="ChEBI" id="CHEBI:57783"/>
    </ligand>
</feature>
<feature type="binding site" evidence="1">
    <location>
        <position position="192"/>
    </location>
    <ligand>
        <name>sn-glycerol 3-phosphate</name>
        <dbReference type="ChEBI" id="CHEBI:57597"/>
    </ligand>
</feature>
<feature type="binding site" evidence="1">
    <location>
        <position position="245"/>
    </location>
    <ligand>
        <name>sn-glycerol 3-phosphate</name>
        <dbReference type="ChEBI" id="CHEBI:57597"/>
    </ligand>
</feature>
<feature type="binding site" evidence="1">
    <location>
        <position position="255"/>
    </location>
    <ligand>
        <name>sn-glycerol 3-phosphate</name>
        <dbReference type="ChEBI" id="CHEBI:57597"/>
    </ligand>
</feature>
<feature type="binding site" evidence="1">
    <location>
        <position position="256"/>
    </location>
    <ligand>
        <name>NADPH</name>
        <dbReference type="ChEBI" id="CHEBI:57783"/>
    </ligand>
</feature>
<feature type="binding site" evidence="1">
    <location>
        <position position="256"/>
    </location>
    <ligand>
        <name>sn-glycerol 3-phosphate</name>
        <dbReference type="ChEBI" id="CHEBI:57597"/>
    </ligand>
</feature>
<feature type="binding site" evidence="1">
    <location>
        <position position="257"/>
    </location>
    <ligand>
        <name>sn-glycerol 3-phosphate</name>
        <dbReference type="ChEBI" id="CHEBI:57597"/>
    </ligand>
</feature>
<feature type="binding site" evidence="1">
    <location>
        <position position="280"/>
    </location>
    <ligand>
        <name>NADPH</name>
        <dbReference type="ChEBI" id="CHEBI:57783"/>
    </ligand>
</feature>
<feature type="binding site" evidence="1">
    <location>
        <position position="282"/>
    </location>
    <ligand>
        <name>NADPH</name>
        <dbReference type="ChEBI" id="CHEBI:57783"/>
    </ligand>
</feature>